<keyword id="KW-1185">Reference proteome</keyword>
<sequence length="2381" mass="255741">MKTKAHNEDEDEEIDIMNNSDGDSDDDQPSKSSSKVSQSSSKNKRKTSSSKSTNSTIEESIPQTIPAPLSTTITPPTLTMNTSNNFETEEQRKYRLQSESLAQDTASLFDEIQDELDDGFRSLLSGIDITTLPNYSIDNTNNRSIIASSSGTVNNSNNNNNNDGGISEERKRLTASAPTIPTTTLPASLPVNLSSSTSSTNILSGTASPKKRKSKDENTTINEQENVNNINSGNVKNSKNNSGSSISSSISSSSSSGSSSSKSKKSKKSKNEENSEGFVIAEDENDHKSSSNKSNSKKSSSNKSKSPSNKNNNKKLPQSRSIINSKKSTESEYDSSDSSDMDLDVNISDCDSDIEFPSFTSQTTKPNNSNSNNNNNNNSINSTIPASNNINSANNSKTTNKNITSNKKDNKVIYNDDGSDSETPILTSVKIQREQQIPQQQQQQQQQQHPQQHPQQQQTQNNNNNNNNNNNNNNNNNNNNNNNNNININNNNNNNQAFSSLISSHTAHIYPEPHFHSLSFLAPFSPLGLPIASPMSPGLLDLVSLPNSCSVPPLSPLSPLSPLLSPVSPSFNANNKHNNNSLTNKNIDATMITSIAPIMDKTSTITITPISTTDDVSNNISIISNNGNNLIANNENVTNININNNNNNNNNNNNNNNNNNNNNNNNNNNNNNNNNNNNNNNNNNNNNNNNNNGDEMSIEFSTITSGITGSGEAGSNNSNINSGVINTSTSISTPTIIPTPTPTTTIATTTTTTTESINQPSIFSNHISVFSNLLPTVIPSANIELDDIMNIQSSSSLSINSPISSQSSQSIIFSPISSGSNVISNNSINNNNNNAKKSKRFSMNPNVQKHFQPTIWHEEEKLLFRELFCAYGRDWQMVSTLMCGTKSPTQIKNFYYDVRVTLLAPFFGVSGDGETKSRIMLPEMEKDIIISKPEQNVNSNNNNNGGGNSLKDGSNGKRFQSSLSSSNGNVGGSGSGDDDVRVKKKSRTASKRSFRFSRIANETNRTPKNQPKPSKNKVLPETPPNVKYPVGSALFYFYTNPETCPVGKWFEVKILEWDNNAQVPVSMINQSSNSSPVNNNNSNNNNNNNNINPLENMEISFTELNNGIDSSMVDFTAGLDLDLLGSANDSMDLNTDVKIQQTITTSSTTTTTSTPVSSSSSSSSSSSSSSSSSSTTTATATTTGSAKSKKEKENVNNNNNNNLSNQETTIGTKYKAVMFNMNKTKGFWVFENELKEEMEIGQEIWEFSADPNAEEEMITISSSNSNSSSNLSSSLNNTIILLSTPTPPPMPIPVSTTTIAPPILSTTTPTQQQFQQLQPTQQLQQLPPPPPPPPKPPIDNTITVSSPVDLTIPLIENQMIVGGNGNCFVNCIMGENRPNGIQTQDLVIKLVESLYVTTDKFKIQQYLEQKLENTTAPNTKFPYYPFPSSTTTNSATSTPTSTPTSTPSTSASTLTPTSTPTSTPVPAPTSLSTPTLTSPVLETTTIIPSDNKEKDIKDGIYSISNIISSELLEIPTFSIEFISSGSLSIVSKQKCFFEAISNSFEEREIVSINFNSIFNTYQFISNINDKAFIIQLFDNILKASDISVQKIIGDKPPPATITPILPPKTEVTQTTPPSSSSSSSSSSSSSSSSSSSSTTKNNSTTIVNNTDSTKFVDVKKEQLTTVPIVKQESNSPSKTLPPSNSPSKTLPLSNSPSKTLLPSNSSIPNKSTPSPIPKPTTSSTTYPVTTSNPSSKPQTPIPTSNKSPAKSNTTTTPATTTSNTSITPTPKPLTQTTTSTSNPNNLTQPTTSNSNPNNLTQPTNTTLKPSLPNQNTTTTITTTKPMVSAPTNSTNQNTIPNATTKPPPVVNKLPANPPLKLTPPPNSKIPAILATTTASRAPAPPIPNGGLVPNLIIKPASSSSIIKQPAGNISTPSATNFKPNPTPNAKPLAGNTSIPSTTYKQPATGVSNTSTITQATTTVPGTTTTTNPNGSIPPKPSNGLAVPSKTTTTIVNGQTVVTTTPINPNLSKPKIIMINGQKLYACTCCLSKNPPGTVIPPQYISKPVSKLSTTTSTVGGKPVANNMTTTTTSSTSTTMTTPTSTNTTTNGTPQQSTKSMINNGLTPGSNYKTAAIIHPKPLSGIPGGNTLSGKSPTPLTIKPPSGLIPGKMPPSLSSSSANPISITNNTTSLSQQSNTTNTMPSTVSLSSGSTSINSNSSNSKSLRSPKSSDNDGKESKKERKEKNLDKESGKSDRETKSEKNENRKKDKNHDKDSKSDKNHDKSDKNNNDKFDSNKNDNGAIVTSPFNLLFNPDKSPIPYKLFIGKRELLLECRRLLRIQCSRISELNKQNIESGKDTTEVISKMKDLISELSSFKFLLLDIASERYKLYKKSIGIYDF</sequence>
<accession>Q54QC0</accession>
<feature type="chain" id="PRO_0000329393" description="Myb-like protein U">
    <location>
        <begin position="1"/>
        <end position="2381"/>
    </location>
</feature>
<feature type="domain" description="Myb-like">
    <location>
        <begin position="856"/>
        <end position="899"/>
    </location>
</feature>
<feature type="region of interest" description="Disordered" evidence="1">
    <location>
        <begin position="1"/>
        <end position="85"/>
    </location>
</feature>
<feature type="region of interest" description="Disordered" evidence="1">
    <location>
        <begin position="148"/>
        <end position="167"/>
    </location>
</feature>
<feature type="region of interest" description="Disordered" evidence="1">
    <location>
        <begin position="178"/>
        <end position="492"/>
    </location>
</feature>
<feature type="region of interest" description="Disordered" evidence="1">
    <location>
        <begin position="641"/>
        <end position="696"/>
    </location>
</feature>
<feature type="region of interest" description="Disordered" evidence="1">
    <location>
        <begin position="932"/>
        <end position="1024"/>
    </location>
</feature>
<feature type="region of interest" description="Disordered" evidence="1">
    <location>
        <begin position="1068"/>
        <end position="1093"/>
    </location>
</feature>
<feature type="region of interest" description="Disordered" evidence="1">
    <location>
        <begin position="1145"/>
        <end position="1207"/>
    </location>
</feature>
<feature type="region of interest" description="Disordered" evidence="1">
    <location>
        <begin position="1295"/>
        <end position="1339"/>
    </location>
</feature>
<feature type="region of interest" description="Disordered" evidence="1">
    <location>
        <begin position="1422"/>
        <end position="1474"/>
    </location>
</feature>
<feature type="region of interest" description="Disordered" evidence="1">
    <location>
        <begin position="1597"/>
        <end position="1647"/>
    </location>
</feature>
<feature type="region of interest" description="Disordered" evidence="1">
    <location>
        <begin position="1667"/>
        <end position="1849"/>
    </location>
</feature>
<feature type="region of interest" description="Disordered" evidence="1">
    <location>
        <begin position="1961"/>
        <end position="1985"/>
    </location>
</feature>
<feature type="region of interest" description="Disordered" evidence="1">
    <location>
        <begin position="2055"/>
        <end position="2106"/>
    </location>
</feature>
<feature type="region of interest" description="Disordered" evidence="1">
    <location>
        <begin position="2122"/>
        <end position="2280"/>
    </location>
</feature>
<feature type="compositionally biased region" description="Low complexity" evidence="1">
    <location>
        <begin position="30"/>
        <end position="41"/>
    </location>
</feature>
<feature type="compositionally biased region" description="Low complexity" evidence="1">
    <location>
        <begin position="64"/>
        <end position="79"/>
    </location>
</feature>
<feature type="compositionally biased region" description="Low complexity" evidence="1">
    <location>
        <begin position="192"/>
        <end position="204"/>
    </location>
</feature>
<feature type="compositionally biased region" description="Low complexity" evidence="1">
    <location>
        <begin position="225"/>
        <end position="261"/>
    </location>
</feature>
<feature type="compositionally biased region" description="Low complexity" evidence="1">
    <location>
        <begin position="291"/>
        <end position="315"/>
    </location>
</feature>
<feature type="compositionally biased region" description="Acidic residues" evidence="1">
    <location>
        <begin position="331"/>
        <end position="343"/>
    </location>
</feature>
<feature type="compositionally biased region" description="Low complexity" evidence="1">
    <location>
        <begin position="363"/>
        <end position="405"/>
    </location>
</feature>
<feature type="compositionally biased region" description="Polar residues" evidence="1">
    <location>
        <begin position="421"/>
        <end position="430"/>
    </location>
</feature>
<feature type="compositionally biased region" description="Low complexity" evidence="1">
    <location>
        <begin position="435"/>
        <end position="492"/>
    </location>
</feature>
<feature type="compositionally biased region" description="Low complexity" evidence="1">
    <location>
        <begin position="641"/>
        <end position="692"/>
    </location>
</feature>
<feature type="compositionally biased region" description="Low complexity" evidence="1">
    <location>
        <begin position="936"/>
        <end position="953"/>
    </location>
</feature>
<feature type="compositionally biased region" description="Basic residues" evidence="1">
    <location>
        <begin position="982"/>
        <end position="995"/>
    </location>
</feature>
<feature type="compositionally biased region" description="Polar residues" evidence="1">
    <location>
        <begin position="1000"/>
        <end position="1013"/>
    </location>
</feature>
<feature type="compositionally biased region" description="Low complexity" evidence="1">
    <location>
        <begin position="1069"/>
        <end position="1092"/>
    </location>
</feature>
<feature type="compositionally biased region" description="Low complexity" evidence="1">
    <location>
        <begin position="1145"/>
        <end position="1186"/>
    </location>
</feature>
<feature type="compositionally biased region" description="Low complexity" evidence="1">
    <location>
        <begin position="1195"/>
        <end position="1205"/>
    </location>
</feature>
<feature type="compositionally biased region" description="Low complexity" evidence="1">
    <location>
        <begin position="1306"/>
        <end position="1325"/>
    </location>
</feature>
<feature type="compositionally biased region" description="Pro residues" evidence="1">
    <location>
        <begin position="1326"/>
        <end position="1337"/>
    </location>
</feature>
<feature type="compositionally biased region" description="Low complexity" evidence="1">
    <location>
        <begin position="1427"/>
        <end position="1474"/>
    </location>
</feature>
<feature type="compositionally biased region" description="Pro residues" evidence="1">
    <location>
        <begin position="1597"/>
        <end position="1606"/>
    </location>
</feature>
<feature type="compositionally biased region" description="Low complexity" evidence="1">
    <location>
        <begin position="1618"/>
        <end position="1637"/>
    </location>
</feature>
<feature type="compositionally biased region" description="Polar residues" evidence="1">
    <location>
        <begin position="1638"/>
        <end position="1647"/>
    </location>
</feature>
<feature type="compositionally biased region" description="Polar residues" evidence="1">
    <location>
        <begin position="1671"/>
        <end position="1701"/>
    </location>
</feature>
<feature type="compositionally biased region" description="Low complexity" evidence="1">
    <location>
        <begin position="1702"/>
        <end position="1735"/>
    </location>
</feature>
<feature type="compositionally biased region" description="Low complexity" evidence="1">
    <location>
        <begin position="1743"/>
        <end position="1809"/>
    </location>
</feature>
<feature type="compositionally biased region" description="Polar residues" evidence="1">
    <location>
        <begin position="1829"/>
        <end position="1844"/>
    </location>
</feature>
<feature type="compositionally biased region" description="Low complexity" evidence="1">
    <location>
        <begin position="1961"/>
        <end position="1970"/>
    </location>
</feature>
<feature type="compositionally biased region" description="Low complexity" evidence="1">
    <location>
        <begin position="2065"/>
        <end position="2097"/>
    </location>
</feature>
<feature type="compositionally biased region" description="Polar residues" evidence="1">
    <location>
        <begin position="2129"/>
        <end position="2138"/>
    </location>
</feature>
<feature type="compositionally biased region" description="Low complexity" evidence="1">
    <location>
        <begin position="2154"/>
        <end position="2209"/>
    </location>
</feature>
<feature type="compositionally biased region" description="Basic and acidic residues" evidence="1">
    <location>
        <begin position="2210"/>
        <end position="2278"/>
    </location>
</feature>
<evidence type="ECO:0000256" key="1">
    <source>
        <dbReference type="SAM" id="MobiDB-lite"/>
    </source>
</evidence>
<reference key="1">
    <citation type="journal article" date="2005" name="Nature">
        <title>The genome of the social amoeba Dictyostelium discoideum.</title>
        <authorList>
            <person name="Eichinger L."/>
            <person name="Pachebat J.A."/>
            <person name="Gloeckner G."/>
            <person name="Rajandream M.A."/>
            <person name="Sucgang R."/>
            <person name="Berriman M."/>
            <person name="Song J."/>
            <person name="Olsen R."/>
            <person name="Szafranski K."/>
            <person name="Xu Q."/>
            <person name="Tunggal B."/>
            <person name="Kummerfeld S."/>
            <person name="Madera M."/>
            <person name="Konfortov B.A."/>
            <person name="Rivero F."/>
            <person name="Bankier A.T."/>
            <person name="Lehmann R."/>
            <person name="Hamlin N."/>
            <person name="Davies R."/>
            <person name="Gaudet P."/>
            <person name="Fey P."/>
            <person name="Pilcher K."/>
            <person name="Chen G."/>
            <person name="Saunders D."/>
            <person name="Sodergren E.J."/>
            <person name="Davis P."/>
            <person name="Kerhornou A."/>
            <person name="Nie X."/>
            <person name="Hall N."/>
            <person name="Anjard C."/>
            <person name="Hemphill L."/>
            <person name="Bason N."/>
            <person name="Farbrother P."/>
            <person name="Desany B."/>
            <person name="Just E."/>
            <person name="Morio T."/>
            <person name="Rost R."/>
            <person name="Churcher C.M."/>
            <person name="Cooper J."/>
            <person name="Haydock S."/>
            <person name="van Driessche N."/>
            <person name="Cronin A."/>
            <person name="Goodhead I."/>
            <person name="Muzny D.M."/>
            <person name="Mourier T."/>
            <person name="Pain A."/>
            <person name="Lu M."/>
            <person name="Harper D."/>
            <person name="Lindsay R."/>
            <person name="Hauser H."/>
            <person name="James K.D."/>
            <person name="Quiles M."/>
            <person name="Madan Babu M."/>
            <person name="Saito T."/>
            <person name="Buchrieser C."/>
            <person name="Wardroper A."/>
            <person name="Felder M."/>
            <person name="Thangavelu M."/>
            <person name="Johnson D."/>
            <person name="Knights A."/>
            <person name="Loulseged H."/>
            <person name="Mungall K.L."/>
            <person name="Oliver K."/>
            <person name="Price C."/>
            <person name="Quail M.A."/>
            <person name="Urushihara H."/>
            <person name="Hernandez J."/>
            <person name="Rabbinowitsch E."/>
            <person name="Steffen D."/>
            <person name="Sanders M."/>
            <person name="Ma J."/>
            <person name="Kohara Y."/>
            <person name="Sharp S."/>
            <person name="Simmonds M.N."/>
            <person name="Spiegler S."/>
            <person name="Tivey A."/>
            <person name="Sugano S."/>
            <person name="White B."/>
            <person name="Walker D."/>
            <person name="Woodward J.R."/>
            <person name="Winckler T."/>
            <person name="Tanaka Y."/>
            <person name="Shaulsky G."/>
            <person name="Schleicher M."/>
            <person name="Weinstock G.M."/>
            <person name="Rosenthal A."/>
            <person name="Cox E.C."/>
            <person name="Chisholm R.L."/>
            <person name="Gibbs R.A."/>
            <person name="Loomis W.F."/>
            <person name="Platzer M."/>
            <person name="Kay R.R."/>
            <person name="Williams J.G."/>
            <person name="Dear P.H."/>
            <person name="Noegel A.A."/>
            <person name="Barrell B.G."/>
            <person name="Kuspa A."/>
        </authorList>
    </citation>
    <scope>NUCLEOTIDE SEQUENCE [LARGE SCALE GENOMIC DNA]</scope>
    <source>
        <strain>AX4</strain>
    </source>
</reference>
<dbReference type="EMBL" id="AAFI02000058">
    <property type="protein sequence ID" value="EAL65464.1"/>
    <property type="molecule type" value="Genomic_DNA"/>
</dbReference>
<dbReference type="RefSeq" id="XP_638824.1">
    <property type="nucleotide sequence ID" value="XM_633732.1"/>
</dbReference>
<dbReference type="FunCoup" id="Q54QC0">
    <property type="interactions" value="141"/>
</dbReference>
<dbReference type="STRING" id="44689.Q54QC0"/>
<dbReference type="GlyGen" id="Q54QC0">
    <property type="glycosylation" value="5 sites"/>
</dbReference>
<dbReference type="PaxDb" id="44689-DDB0233333"/>
<dbReference type="EnsemblProtists" id="EAL65464">
    <property type="protein sequence ID" value="EAL65464"/>
    <property type="gene ID" value="DDB_G0283953"/>
</dbReference>
<dbReference type="GeneID" id="8624348"/>
<dbReference type="KEGG" id="ddi:DDB_G0283953"/>
<dbReference type="dictyBase" id="DDB_G0283953">
    <property type="gene designation" value="mybU"/>
</dbReference>
<dbReference type="VEuPathDB" id="AmoebaDB:DDB_G0283953"/>
<dbReference type="HOGENOM" id="CLU_229425_0_0_1"/>
<dbReference type="InParanoid" id="Q54QC0"/>
<dbReference type="OMA" id="NFYYDVR"/>
<dbReference type="PRO" id="PR:Q54QC0"/>
<dbReference type="Proteomes" id="UP000002195">
    <property type="component" value="Chromosome 4"/>
</dbReference>
<dbReference type="CDD" id="cd00167">
    <property type="entry name" value="SANT"/>
    <property type="match status" value="1"/>
</dbReference>
<dbReference type="Gene3D" id="1.20.58.1880">
    <property type="match status" value="1"/>
</dbReference>
<dbReference type="InterPro" id="IPR053019">
    <property type="entry name" value="GATA_zinc_finger"/>
</dbReference>
<dbReference type="InterPro" id="IPR009057">
    <property type="entry name" value="Homeodomain-like_sf"/>
</dbReference>
<dbReference type="InterPro" id="IPR001005">
    <property type="entry name" value="SANT/Myb"/>
</dbReference>
<dbReference type="InterPro" id="IPR017884">
    <property type="entry name" value="SANT_dom"/>
</dbReference>
<dbReference type="PANTHER" id="PTHR23353:SF32">
    <property type="entry name" value="AAC-RICH MRNA CLONE AAC4 PROTEIN-RELATED"/>
    <property type="match status" value="1"/>
</dbReference>
<dbReference type="PANTHER" id="PTHR23353">
    <property type="entry name" value="RAB-GAP/TBC-RELATED"/>
    <property type="match status" value="1"/>
</dbReference>
<dbReference type="Pfam" id="PF00249">
    <property type="entry name" value="Myb_DNA-binding"/>
    <property type="match status" value="1"/>
</dbReference>
<dbReference type="SMART" id="SM00717">
    <property type="entry name" value="SANT"/>
    <property type="match status" value="1"/>
</dbReference>
<dbReference type="SUPFAM" id="SSF46689">
    <property type="entry name" value="Homeodomain-like"/>
    <property type="match status" value="1"/>
</dbReference>
<protein>
    <recommendedName>
        <fullName>Myb-like protein U</fullName>
    </recommendedName>
</protein>
<gene>
    <name type="primary">mybU</name>
    <name type="ORF">DDB_G0283953</name>
</gene>
<organism>
    <name type="scientific">Dictyostelium discoideum</name>
    <name type="common">Social amoeba</name>
    <dbReference type="NCBI Taxonomy" id="44689"/>
    <lineage>
        <taxon>Eukaryota</taxon>
        <taxon>Amoebozoa</taxon>
        <taxon>Evosea</taxon>
        <taxon>Eumycetozoa</taxon>
        <taxon>Dictyostelia</taxon>
        <taxon>Dictyosteliales</taxon>
        <taxon>Dictyosteliaceae</taxon>
        <taxon>Dictyostelium</taxon>
    </lineage>
</organism>
<proteinExistence type="predicted"/>
<name>MYBU_DICDI</name>